<feature type="chain" id="PRO_0000308662" description="CASP-like protein 4B1">
    <location>
        <begin position="1"/>
        <end position="188"/>
    </location>
</feature>
<feature type="topological domain" description="Cytoplasmic" evidence="2">
    <location>
        <begin position="1"/>
        <end position="46"/>
    </location>
</feature>
<feature type="transmembrane region" description="Helical" evidence="2">
    <location>
        <begin position="47"/>
        <end position="67"/>
    </location>
</feature>
<feature type="topological domain" description="Extracellular" evidence="2">
    <location>
        <begin position="68"/>
        <end position="84"/>
    </location>
</feature>
<feature type="transmembrane region" description="Helical" evidence="2">
    <location>
        <begin position="85"/>
        <end position="105"/>
    </location>
</feature>
<feature type="topological domain" description="Cytoplasmic" evidence="2">
    <location>
        <begin position="106"/>
        <end position="124"/>
    </location>
</feature>
<feature type="transmembrane region" description="Helical" evidence="2">
    <location>
        <begin position="125"/>
        <end position="145"/>
    </location>
</feature>
<feature type="topological domain" description="Extracellular" evidence="2">
    <location>
        <begin position="146"/>
        <end position="156"/>
    </location>
</feature>
<feature type="transmembrane region" description="Helical" evidence="2">
    <location>
        <begin position="157"/>
        <end position="177"/>
    </location>
</feature>
<feature type="topological domain" description="Cytoplasmic" evidence="2">
    <location>
        <begin position="178"/>
        <end position="188"/>
    </location>
</feature>
<feature type="region of interest" description="Disordered" evidence="3">
    <location>
        <begin position="1"/>
        <end position="34"/>
    </location>
</feature>
<feature type="compositionally biased region" description="Polar residues" evidence="3">
    <location>
        <begin position="24"/>
        <end position="34"/>
    </location>
</feature>
<feature type="sequence conflict" description="In Ref. 3; AAM62879." evidence="4" ref="3">
    <original>A</original>
    <variation>S</variation>
    <location>
        <position position="88"/>
    </location>
</feature>
<reference key="1">
    <citation type="journal article" date="1999" name="Nature">
        <title>Sequence and analysis of chromosome 2 of the plant Arabidopsis thaliana.</title>
        <authorList>
            <person name="Lin X."/>
            <person name="Kaul S."/>
            <person name="Rounsley S.D."/>
            <person name="Shea T.P."/>
            <person name="Benito M.-I."/>
            <person name="Town C.D."/>
            <person name="Fujii C.Y."/>
            <person name="Mason T.M."/>
            <person name="Bowman C.L."/>
            <person name="Barnstead M.E."/>
            <person name="Feldblyum T.V."/>
            <person name="Buell C.R."/>
            <person name="Ketchum K.A."/>
            <person name="Lee J.J."/>
            <person name="Ronning C.M."/>
            <person name="Koo H.L."/>
            <person name="Moffat K.S."/>
            <person name="Cronin L.A."/>
            <person name="Shen M."/>
            <person name="Pai G."/>
            <person name="Van Aken S."/>
            <person name="Umayam L."/>
            <person name="Tallon L.J."/>
            <person name="Gill J.E."/>
            <person name="Adams M.D."/>
            <person name="Carrera A.J."/>
            <person name="Creasy T.H."/>
            <person name="Goodman H.M."/>
            <person name="Somerville C.R."/>
            <person name="Copenhaver G.P."/>
            <person name="Preuss D."/>
            <person name="Nierman W.C."/>
            <person name="White O."/>
            <person name="Eisen J.A."/>
            <person name="Salzberg S.L."/>
            <person name="Fraser C.M."/>
            <person name="Venter J.C."/>
        </authorList>
    </citation>
    <scope>NUCLEOTIDE SEQUENCE [LARGE SCALE GENOMIC DNA]</scope>
    <source>
        <strain>cv. Columbia</strain>
    </source>
</reference>
<reference key="2">
    <citation type="journal article" date="2017" name="Plant J.">
        <title>Araport11: a complete reannotation of the Arabidopsis thaliana reference genome.</title>
        <authorList>
            <person name="Cheng C.Y."/>
            <person name="Krishnakumar V."/>
            <person name="Chan A.P."/>
            <person name="Thibaud-Nissen F."/>
            <person name="Schobel S."/>
            <person name="Town C.D."/>
        </authorList>
    </citation>
    <scope>GENOME REANNOTATION</scope>
    <source>
        <strain>cv. Columbia</strain>
    </source>
</reference>
<reference key="3">
    <citation type="journal article" date="2003" name="Science">
        <title>Empirical analysis of transcriptional activity in the Arabidopsis genome.</title>
        <authorList>
            <person name="Yamada K."/>
            <person name="Lim J."/>
            <person name="Dale J.M."/>
            <person name="Chen H."/>
            <person name="Shinn P."/>
            <person name="Palm C.J."/>
            <person name="Southwick A.M."/>
            <person name="Wu H.C."/>
            <person name="Kim C.J."/>
            <person name="Nguyen M."/>
            <person name="Pham P.K."/>
            <person name="Cheuk R.F."/>
            <person name="Karlin-Newmann G."/>
            <person name="Liu S.X."/>
            <person name="Lam B."/>
            <person name="Sakano H."/>
            <person name="Wu T."/>
            <person name="Yu G."/>
            <person name="Miranda M."/>
            <person name="Quach H.L."/>
            <person name="Tripp M."/>
            <person name="Chang C.H."/>
            <person name="Lee J.M."/>
            <person name="Toriumi M.J."/>
            <person name="Chan M.M."/>
            <person name="Tang C.C."/>
            <person name="Onodera C.S."/>
            <person name="Deng J.M."/>
            <person name="Akiyama K."/>
            <person name="Ansari Y."/>
            <person name="Arakawa T."/>
            <person name="Banh J."/>
            <person name="Banno F."/>
            <person name="Bowser L."/>
            <person name="Brooks S.Y."/>
            <person name="Carninci P."/>
            <person name="Chao Q."/>
            <person name="Choy N."/>
            <person name="Enju A."/>
            <person name="Goldsmith A.D."/>
            <person name="Gurjal M."/>
            <person name="Hansen N.F."/>
            <person name="Hayashizaki Y."/>
            <person name="Johnson-Hopson C."/>
            <person name="Hsuan V.W."/>
            <person name="Iida K."/>
            <person name="Karnes M."/>
            <person name="Khan S."/>
            <person name="Koesema E."/>
            <person name="Ishida J."/>
            <person name="Jiang P.X."/>
            <person name="Jones T."/>
            <person name="Kawai J."/>
            <person name="Kamiya A."/>
            <person name="Meyers C."/>
            <person name="Nakajima M."/>
            <person name="Narusaka M."/>
            <person name="Seki M."/>
            <person name="Sakurai T."/>
            <person name="Satou M."/>
            <person name="Tamse R."/>
            <person name="Vaysberg M."/>
            <person name="Wallender E.K."/>
            <person name="Wong C."/>
            <person name="Yamamura Y."/>
            <person name="Yuan S."/>
            <person name="Shinozaki K."/>
            <person name="Davis R.W."/>
            <person name="Theologis A."/>
            <person name="Ecker J.R."/>
        </authorList>
    </citation>
    <scope>NUCLEOTIDE SEQUENCE [LARGE SCALE MRNA]</scope>
    <source>
        <strain>cv. Columbia</strain>
    </source>
</reference>
<reference key="4">
    <citation type="submission" date="2002-03" db="EMBL/GenBank/DDBJ databases">
        <title>Full-length cDNA from Arabidopsis thaliana.</title>
        <authorList>
            <person name="Brover V.V."/>
            <person name="Troukhan M.E."/>
            <person name="Alexandrov N.A."/>
            <person name="Lu Y.-P."/>
            <person name="Flavell R.B."/>
            <person name="Feldmann K.A."/>
        </authorList>
    </citation>
    <scope>NUCLEOTIDE SEQUENCE [LARGE SCALE MRNA]</scope>
</reference>
<reference key="5">
    <citation type="journal article" date="2014" name="Plant Physiol.">
        <title>Functional and evolutionary analysis of the CASPARIAN STRIP MEMBRANE DOMAIN PROTEIN family.</title>
        <authorList>
            <person name="Roppolo D."/>
            <person name="Boeckmann B."/>
            <person name="Pfister A."/>
            <person name="Boutet E."/>
            <person name="Rubio M.C."/>
            <person name="Denervaud-Tendon V."/>
            <person name="Vermeer J.E."/>
            <person name="Gheyselinck J."/>
            <person name="Xenarios I."/>
            <person name="Geldner N."/>
        </authorList>
    </citation>
    <scope>GENE FAMILY</scope>
    <scope>NOMENCLATURE</scope>
</reference>
<protein>
    <recommendedName>
        <fullName>CASP-like protein 4B1</fullName>
        <shortName>AtCASPL4B1</shortName>
    </recommendedName>
</protein>
<accession>Q8LE26</accession>
<accession>O80903</accession>
<accession>Q94K27</accession>
<name>CSPLA_ARATH</name>
<comment type="subunit">
    <text evidence="1">Homodimer and heterodimers.</text>
</comment>
<comment type="subcellular location">
    <subcellularLocation>
        <location evidence="1">Cell membrane</location>
        <topology evidence="1">Multi-pass membrane protein</topology>
    </subcellularLocation>
</comment>
<comment type="similarity">
    <text evidence="4">Belongs to the Casparian strip membrane proteins (CASP) family.</text>
</comment>
<proteinExistence type="evidence at transcript level"/>
<dbReference type="EMBL" id="AC004683">
    <property type="protein sequence ID" value="AAM14993.1"/>
    <property type="molecule type" value="Genomic_DNA"/>
</dbReference>
<dbReference type="EMBL" id="AC005499">
    <property type="protein sequence ID" value="AAC67370.2"/>
    <property type="molecule type" value="Genomic_DNA"/>
</dbReference>
<dbReference type="EMBL" id="CP002685">
    <property type="protein sequence ID" value="AEC09542.1"/>
    <property type="molecule type" value="Genomic_DNA"/>
</dbReference>
<dbReference type="EMBL" id="AF370348">
    <property type="protein sequence ID" value="AAK44163.1"/>
    <property type="molecule type" value="mRNA"/>
</dbReference>
<dbReference type="EMBL" id="AY062978">
    <property type="protein sequence ID" value="AAL34152.1"/>
    <property type="molecule type" value="mRNA"/>
</dbReference>
<dbReference type="EMBL" id="AY085658">
    <property type="protein sequence ID" value="AAM62879.1"/>
    <property type="molecule type" value="mRNA"/>
</dbReference>
<dbReference type="PIR" id="T02497">
    <property type="entry name" value="T02497"/>
</dbReference>
<dbReference type="RefSeq" id="NP_565891.1">
    <property type="nucleotide sequence ID" value="NM_129405.4"/>
</dbReference>
<dbReference type="SMR" id="Q8LE26"/>
<dbReference type="FunCoup" id="Q8LE26">
    <property type="interactions" value="144"/>
</dbReference>
<dbReference type="STRING" id="3702.Q8LE26"/>
<dbReference type="TCDB" id="9.B.56.1.2">
    <property type="family name" value="the bacterial disease resistance and oomycete disease susceptibility protein, pimp1 (pimp1) family"/>
</dbReference>
<dbReference type="GlyGen" id="Q8LE26">
    <property type="glycosylation" value="1 site"/>
</dbReference>
<dbReference type="iPTMnet" id="Q8LE26"/>
<dbReference type="PaxDb" id="3702-AT2G38480.1"/>
<dbReference type="ProteomicsDB" id="224434"/>
<dbReference type="EnsemblPlants" id="AT2G38480.1">
    <property type="protein sequence ID" value="AT2G38480.1"/>
    <property type="gene ID" value="AT2G38480"/>
</dbReference>
<dbReference type="GeneID" id="818430"/>
<dbReference type="Gramene" id="AT2G38480.1">
    <property type="protein sequence ID" value="AT2G38480.1"/>
    <property type="gene ID" value="AT2G38480"/>
</dbReference>
<dbReference type="KEGG" id="ath:AT2G38480"/>
<dbReference type="Araport" id="AT2G38480"/>
<dbReference type="TAIR" id="AT2G38480">
    <property type="gene designation" value="CASPL4B1"/>
</dbReference>
<dbReference type="eggNOG" id="ENOG502RYC3">
    <property type="taxonomic scope" value="Eukaryota"/>
</dbReference>
<dbReference type="HOGENOM" id="CLU_048961_4_1_1"/>
<dbReference type="InParanoid" id="Q8LE26"/>
<dbReference type="OMA" id="LEMNIDV"/>
<dbReference type="PhylomeDB" id="Q8LE26"/>
<dbReference type="PRO" id="PR:Q8LE26"/>
<dbReference type="Proteomes" id="UP000006548">
    <property type="component" value="Chromosome 2"/>
</dbReference>
<dbReference type="ExpressionAtlas" id="Q8LE26">
    <property type="expression patterns" value="baseline and differential"/>
</dbReference>
<dbReference type="GO" id="GO:0005886">
    <property type="term" value="C:plasma membrane"/>
    <property type="evidence" value="ECO:0007669"/>
    <property type="project" value="UniProtKB-SubCell"/>
</dbReference>
<dbReference type="InterPro" id="IPR006702">
    <property type="entry name" value="CASP_dom"/>
</dbReference>
<dbReference type="PANTHER" id="PTHR33573">
    <property type="entry name" value="CASP-LIKE PROTEIN 4A4"/>
    <property type="match status" value="1"/>
</dbReference>
<dbReference type="PANTHER" id="PTHR33573:SF57">
    <property type="entry name" value="CASP-LIKE PROTEIN 4B1"/>
    <property type="match status" value="1"/>
</dbReference>
<dbReference type="Pfam" id="PF04535">
    <property type="entry name" value="CASP_dom"/>
    <property type="match status" value="1"/>
</dbReference>
<keyword id="KW-1003">Cell membrane</keyword>
<keyword id="KW-0472">Membrane</keyword>
<keyword id="KW-1185">Reference proteome</keyword>
<keyword id="KW-0812">Transmembrane</keyword>
<keyword id="KW-1133">Transmembrane helix</keyword>
<sequence>MTNPDNMKPVEATDVESAAEKTSEPTPASGTSTITQRWKREDLIKKASPITRGICLLFSLIAFLIMVSNKHGYGRNFNDYEEYRYVLAISIISTLYTAWQTFAHFSKREIFDRRTSILVDFSGDQIVAYLLISAASSAIPLTNIFREGQDNIFTDSAASAISMAIFAFIALALSALFSGYKLSTHSFI</sequence>
<gene>
    <name type="ordered locus">At2g38480</name>
    <name type="ORF">T19C21.23</name>
    <name type="ORF">T6A23.32</name>
</gene>
<organism>
    <name type="scientific">Arabidopsis thaliana</name>
    <name type="common">Mouse-ear cress</name>
    <dbReference type="NCBI Taxonomy" id="3702"/>
    <lineage>
        <taxon>Eukaryota</taxon>
        <taxon>Viridiplantae</taxon>
        <taxon>Streptophyta</taxon>
        <taxon>Embryophyta</taxon>
        <taxon>Tracheophyta</taxon>
        <taxon>Spermatophyta</taxon>
        <taxon>Magnoliopsida</taxon>
        <taxon>eudicotyledons</taxon>
        <taxon>Gunneridae</taxon>
        <taxon>Pentapetalae</taxon>
        <taxon>rosids</taxon>
        <taxon>malvids</taxon>
        <taxon>Brassicales</taxon>
        <taxon>Brassicaceae</taxon>
        <taxon>Camelineae</taxon>
        <taxon>Arabidopsis</taxon>
    </lineage>
</organism>
<evidence type="ECO:0000250" key="1"/>
<evidence type="ECO:0000255" key="2"/>
<evidence type="ECO:0000256" key="3">
    <source>
        <dbReference type="SAM" id="MobiDB-lite"/>
    </source>
</evidence>
<evidence type="ECO:0000305" key="4"/>